<organism>
    <name type="scientific">Aliivibrio fischeri (strain ATCC 700601 / ES114)</name>
    <name type="common">Vibrio fischeri</name>
    <dbReference type="NCBI Taxonomy" id="312309"/>
    <lineage>
        <taxon>Bacteria</taxon>
        <taxon>Pseudomonadati</taxon>
        <taxon>Pseudomonadota</taxon>
        <taxon>Gammaproteobacteria</taxon>
        <taxon>Vibrionales</taxon>
        <taxon>Vibrionaceae</taxon>
        <taxon>Aliivibrio</taxon>
    </lineage>
</organism>
<proteinExistence type="inferred from homology"/>
<feature type="chain" id="PRO_0000366532" description="Ribosomal RNA large subunit methyltransferase G">
    <location>
        <begin position="1"/>
        <end position="382"/>
    </location>
</feature>
<gene>
    <name evidence="1" type="primary">rlmG</name>
    <name type="ordered locus">VF_0723</name>
</gene>
<sequence length="382" mass="43458">MKTELSLLDRSLNLQRYPKRAQELLQAWDAGDEYIIKYVEEELNLEDGKNILILNDNFGALSCWFSDKHNVTMMTDSFVSQRGTLKNLQRNQCNRVQLITSTEEMPQGFDLVLMQIPKNNRMLTWQLQQLRQSMDSSCPIIAVNKAKEIHSSTLELFEDYLGETKTSLAWKKHRLVFSNANVSNPKTIAEAVCWSVDNEDIDLLNYPNVYSGEKLDQGARFMLDHIPSDPELRHIIDLGCGNGVLSVKAGQLNPEARITCVDESFMAVESAHRNLEVNLGKERQFQFIANNCLDGFKKHSSYLVLCNPPFHQGQAITDHIAWQMFCDAKHILCKDGKLLVIGNRHLDYDGKLCRLFGEENVTTVASNSKFVILEAVKAEKSK</sequence>
<comment type="function">
    <text evidence="1">Specifically methylates the guanine in position 1835 (m2G1835) of 23S rRNA.</text>
</comment>
<comment type="catalytic activity">
    <reaction evidence="1">
        <text>guanosine(1835) in 23S rRNA + S-adenosyl-L-methionine = N(2)-methylguanosine(1835) in 23S rRNA + S-adenosyl-L-homocysteine + H(+)</text>
        <dbReference type="Rhea" id="RHEA:42744"/>
        <dbReference type="Rhea" id="RHEA-COMP:10217"/>
        <dbReference type="Rhea" id="RHEA-COMP:10218"/>
        <dbReference type="ChEBI" id="CHEBI:15378"/>
        <dbReference type="ChEBI" id="CHEBI:57856"/>
        <dbReference type="ChEBI" id="CHEBI:59789"/>
        <dbReference type="ChEBI" id="CHEBI:74269"/>
        <dbReference type="ChEBI" id="CHEBI:74481"/>
        <dbReference type="EC" id="2.1.1.174"/>
    </reaction>
</comment>
<comment type="subcellular location">
    <subcellularLocation>
        <location evidence="1">Cytoplasm</location>
    </subcellularLocation>
</comment>
<comment type="similarity">
    <text evidence="1">Belongs to the methyltransferase superfamily. RlmG family.</text>
</comment>
<reference key="1">
    <citation type="journal article" date="2005" name="Proc. Natl. Acad. Sci. U.S.A.">
        <title>Complete genome sequence of Vibrio fischeri: a symbiotic bacterium with pathogenic congeners.</title>
        <authorList>
            <person name="Ruby E.G."/>
            <person name="Urbanowski M."/>
            <person name="Campbell J."/>
            <person name="Dunn A."/>
            <person name="Faini M."/>
            <person name="Gunsalus R."/>
            <person name="Lostroh P."/>
            <person name="Lupp C."/>
            <person name="McCann J."/>
            <person name="Millikan D."/>
            <person name="Schaefer A."/>
            <person name="Stabb E."/>
            <person name="Stevens A."/>
            <person name="Visick K."/>
            <person name="Whistler C."/>
            <person name="Greenberg E.P."/>
        </authorList>
    </citation>
    <scope>NUCLEOTIDE SEQUENCE [LARGE SCALE GENOMIC DNA]</scope>
    <source>
        <strain>ATCC 700601 / ES114</strain>
    </source>
</reference>
<evidence type="ECO:0000255" key="1">
    <source>
        <dbReference type="HAMAP-Rule" id="MF_01859"/>
    </source>
</evidence>
<dbReference type="EC" id="2.1.1.174" evidence="1"/>
<dbReference type="EMBL" id="CP000020">
    <property type="protein sequence ID" value="AAW85218.1"/>
    <property type="molecule type" value="Genomic_DNA"/>
</dbReference>
<dbReference type="RefSeq" id="WP_011261441.1">
    <property type="nucleotide sequence ID" value="NC_006840.2"/>
</dbReference>
<dbReference type="RefSeq" id="YP_204106.1">
    <property type="nucleotide sequence ID" value="NC_006840.2"/>
</dbReference>
<dbReference type="SMR" id="Q5E6X8"/>
<dbReference type="STRING" id="312309.VF_0723"/>
<dbReference type="EnsemblBacteria" id="AAW85218">
    <property type="protein sequence ID" value="AAW85218"/>
    <property type="gene ID" value="VF_0723"/>
</dbReference>
<dbReference type="GeneID" id="54163378"/>
<dbReference type="KEGG" id="vfi:VF_0723"/>
<dbReference type="PATRIC" id="fig|312309.11.peg.717"/>
<dbReference type="eggNOG" id="COG2813">
    <property type="taxonomic scope" value="Bacteria"/>
</dbReference>
<dbReference type="HOGENOM" id="CLU_040288_4_0_6"/>
<dbReference type="OrthoDB" id="29650at2"/>
<dbReference type="Proteomes" id="UP000000537">
    <property type="component" value="Chromosome I"/>
</dbReference>
<dbReference type="GO" id="GO:0005737">
    <property type="term" value="C:cytoplasm"/>
    <property type="evidence" value="ECO:0007669"/>
    <property type="project" value="UniProtKB-SubCell"/>
</dbReference>
<dbReference type="GO" id="GO:0052916">
    <property type="term" value="F:23S rRNA (guanine(1835)-N(2))-methyltransferase activity"/>
    <property type="evidence" value="ECO:0007669"/>
    <property type="project" value="UniProtKB-EC"/>
</dbReference>
<dbReference type="CDD" id="cd02440">
    <property type="entry name" value="AdoMet_MTases"/>
    <property type="match status" value="1"/>
</dbReference>
<dbReference type="Gene3D" id="3.40.50.150">
    <property type="entry name" value="Vaccinia Virus protein VP39"/>
    <property type="match status" value="2"/>
</dbReference>
<dbReference type="HAMAP" id="MF_01859">
    <property type="entry name" value="23SrRNA_methyltr_G"/>
    <property type="match status" value="1"/>
</dbReference>
<dbReference type="InterPro" id="IPR017237">
    <property type="entry name" value="rRNA_m2G-MeTrfase_RlmG"/>
</dbReference>
<dbReference type="InterPro" id="IPR046977">
    <property type="entry name" value="RsmC/RlmG"/>
</dbReference>
<dbReference type="InterPro" id="IPR029063">
    <property type="entry name" value="SAM-dependent_MTases_sf"/>
</dbReference>
<dbReference type="InterPro" id="IPR007848">
    <property type="entry name" value="Small_mtfrase_dom"/>
</dbReference>
<dbReference type="PANTHER" id="PTHR47816:SF5">
    <property type="entry name" value="RIBOSOMAL RNA LARGE SUBUNIT METHYLTRANSFERASE G"/>
    <property type="match status" value="1"/>
</dbReference>
<dbReference type="PANTHER" id="PTHR47816">
    <property type="entry name" value="RIBOSOMAL RNA SMALL SUBUNIT METHYLTRANSFERASE C"/>
    <property type="match status" value="1"/>
</dbReference>
<dbReference type="Pfam" id="PF05175">
    <property type="entry name" value="MTS"/>
    <property type="match status" value="1"/>
</dbReference>
<dbReference type="PIRSF" id="PIRSF037565">
    <property type="entry name" value="RRNA_m2G_Mtase_RsmD_prd"/>
    <property type="match status" value="1"/>
</dbReference>
<dbReference type="SUPFAM" id="SSF53335">
    <property type="entry name" value="S-adenosyl-L-methionine-dependent methyltransferases"/>
    <property type="match status" value="1"/>
</dbReference>
<protein>
    <recommendedName>
        <fullName evidence="1">Ribosomal RNA large subunit methyltransferase G</fullName>
        <ecNumber evidence="1">2.1.1.174</ecNumber>
    </recommendedName>
    <alternativeName>
        <fullName evidence="1">23S rRNA m2G1835 methyltransferase</fullName>
    </alternativeName>
    <alternativeName>
        <fullName evidence="1">rRNA (guanine-N(2)-)-methyltransferase RlmG</fullName>
    </alternativeName>
</protein>
<accession>Q5E6X8</accession>
<keyword id="KW-0963">Cytoplasm</keyword>
<keyword id="KW-0489">Methyltransferase</keyword>
<keyword id="KW-1185">Reference proteome</keyword>
<keyword id="KW-0698">rRNA processing</keyword>
<keyword id="KW-0949">S-adenosyl-L-methionine</keyword>
<keyword id="KW-0808">Transferase</keyword>
<name>RLMG_ALIF1</name>